<keyword id="KW-0067">ATP-binding</keyword>
<keyword id="KW-0418">Kinase</keyword>
<keyword id="KW-0444">Lipid biosynthesis</keyword>
<keyword id="KW-0443">Lipid metabolism</keyword>
<keyword id="KW-0460">Magnesium</keyword>
<keyword id="KW-0479">Metal-binding</keyword>
<keyword id="KW-0547">Nucleotide-binding</keyword>
<keyword id="KW-0594">Phospholipid biosynthesis</keyword>
<keyword id="KW-1208">Phospholipid metabolism</keyword>
<keyword id="KW-0808">Transferase</keyword>
<accession>Q4L4E9</accession>
<evidence type="ECO:0000250" key="1"/>
<evidence type="ECO:0000255" key="2">
    <source>
        <dbReference type="PROSITE-ProRule" id="PRU00783"/>
    </source>
</evidence>
<evidence type="ECO:0000305" key="3"/>
<dbReference type="EC" id="2.7.1.-"/>
<dbReference type="EMBL" id="AP006716">
    <property type="protein sequence ID" value="BAE05476.1"/>
    <property type="molecule type" value="Genomic_DNA"/>
</dbReference>
<dbReference type="RefSeq" id="WP_011276429.1">
    <property type="nucleotide sequence ID" value="NC_007168.1"/>
</dbReference>
<dbReference type="SMR" id="Q4L4E9"/>
<dbReference type="KEGG" id="sha:SH2167"/>
<dbReference type="eggNOG" id="COG1597">
    <property type="taxonomic scope" value="Bacteria"/>
</dbReference>
<dbReference type="HOGENOM" id="CLU_045532_1_0_9"/>
<dbReference type="OrthoDB" id="142078at2"/>
<dbReference type="Proteomes" id="UP000000543">
    <property type="component" value="Chromosome"/>
</dbReference>
<dbReference type="GO" id="GO:0005886">
    <property type="term" value="C:plasma membrane"/>
    <property type="evidence" value="ECO:0007669"/>
    <property type="project" value="TreeGrafter"/>
</dbReference>
<dbReference type="GO" id="GO:0005524">
    <property type="term" value="F:ATP binding"/>
    <property type="evidence" value="ECO:0007669"/>
    <property type="project" value="UniProtKB-KW"/>
</dbReference>
<dbReference type="GO" id="GO:0004143">
    <property type="term" value="F:ATP-dependent diacylglycerol kinase activity"/>
    <property type="evidence" value="ECO:0007669"/>
    <property type="project" value="TreeGrafter"/>
</dbReference>
<dbReference type="GO" id="GO:0046872">
    <property type="term" value="F:metal ion binding"/>
    <property type="evidence" value="ECO:0007669"/>
    <property type="project" value="UniProtKB-KW"/>
</dbReference>
<dbReference type="GO" id="GO:0008654">
    <property type="term" value="P:phospholipid biosynthetic process"/>
    <property type="evidence" value="ECO:0007669"/>
    <property type="project" value="UniProtKB-KW"/>
</dbReference>
<dbReference type="Gene3D" id="2.60.200.40">
    <property type="match status" value="1"/>
</dbReference>
<dbReference type="Gene3D" id="3.40.50.10330">
    <property type="entry name" value="Probable inorganic polyphosphate/atp-NAD kinase, domain 1"/>
    <property type="match status" value="1"/>
</dbReference>
<dbReference type="InterPro" id="IPR017438">
    <property type="entry name" value="ATP-NAD_kinase_N"/>
</dbReference>
<dbReference type="InterPro" id="IPR005218">
    <property type="entry name" value="Diacylglycerol/lipid_kinase"/>
</dbReference>
<dbReference type="InterPro" id="IPR001206">
    <property type="entry name" value="Diacylglycerol_kinase_cat_dom"/>
</dbReference>
<dbReference type="InterPro" id="IPR050187">
    <property type="entry name" value="Lipid_Phosphate_FormReg"/>
</dbReference>
<dbReference type="InterPro" id="IPR016064">
    <property type="entry name" value="NAD/diacylglycerol_kinase_sf"/>
</dbReference>
<dbReference type="InterPro" id="IPR045540">
    <property type="entry name" value="YegS/DAGK_C"/>
</dbReference>
<dbReference type="NCBIfam" id="TIGR00147">
    <property type="entry name" value="YegS/Rv2252/BmrU family lipid kinase"/>
    <property type="match status" value="1"/>
</dbReference>
<dbReference type="PANTHER" id="PTHR12358:SF106">
    <property type="entry name" value="LIPID KINASE YEGS"/>
    <property type="match status" value="1"/>
</dbReference>
<dbReference type="PANTHER" id="PTHR12358">
    <property type="entry name" value="SPHINGOSINE KINASE"/>
    <property type="match status" value="1"/>
</dbReference>
<dbReference type="Pfam" id="PF00781">
    <property type="entry name" value="DAGK_cat"/>
    <property type="match status" value="1"/>
</dbReference>
<dbReference type="Pfam" id="PF19279">
    <property type="entry name" value="YegS_C"/>
    <property type="match status" value="1"/>
</dbReference>
<dbReference type="SMART" id="SM00046">
    <property type="entry name" value="DAGKc"/>
    <property type="match status" value="1"/>
</dbReference>
<dbReference type="SUPFAM" id="SSF111331">
    <property type="entry name" value="NAD kinase/diacylglycerol kinase-like"/>
    <property type="match status" value="1"/>
</dbReference>
<dbReference type="PROSITE" id="PS50146">
    <property type="entry name" value="DAGK"/>
    <property type="match status" value="1"/>
</dbReference>
<gene>
    <name type="ordered locus">SH2167</name>
</gene>
<protein>
    <recommendedName>
        <fullName>Putative lipid kinase SH2167</fullName>
        <ecNumber>2.7.1.-</ecNumber>
    </recommendedName>
</protein>
<name>Y2167_STAHJ</name>
<sequence length="308" mass="34054">MGQKFNHGVLFYHEHSGLKDIYEGLGEVTKSLTTMCKHLSIQLSENEGDIIKYCERIKNQEYSSDVDIVFILGGDGTVNELVNGVLANDLNVPIGIIPGGTFNDFTKTLNLNPNFSKASEQLKTSHLESYDVMKVNGTYVLNFVGLGLIVQNAENVQEGRKDIFGKLSYVGSTVKTLMNPEDFDYTLTVDDKELNGNTSMLVVANGPNIGGSRIPLMDLSPQDGKLNSFIFDKQSFTILNDVFKKRDSMDWNEITNGIDHIAGKHITLSTDPVMKVDIDGEISLETPITIEVLPKALQILTFPENAEQ</sequence>
<proteinExistence type="inferred from homology"/>
<comment type="function">
    <text evidence="1">May catalyze the ATP-dependent phosphorylation of lipids other than diacylglycerol (DAG).</text>
</comment>
<comment type="cofactor">
    <cofactor evidence="1">
        <name>Mg(2+)</name>
        <dbReference type="ChEBI" id="CHEBI:18420"/>
    </cofactor>
    <text evidence="1">Binds 1 Mg(2+) ion per subunit. This ion appears to have a structural role and is required for catalytic activity.</text>
</comment>
<comment type="similarity">
    <text evidence="3">Belongs to the diacylglycerol/lipid kinase family.</text>
</comment>
<feature type="chain" id="PRO_0000386521" description="Putative lipid kinase SH2167">
    <location>
        <begin position="1"/>
        <end position="308"/>
    </location>
</feature>
<feature type="domain" description="DAGKc" evidence="2">
    <location>
        <begin position="1"/>
        <end position="139"/>
    </location>
</feature>
<feature type="active site" description="Proton acceptor" evidence="1">
    <location>
        <position position="281"/>
    </location>
</feature>
<feature type="binding site" evidence="2">
    <location>
        <position position="44"/>
    </location>
    <ligand>
        <name>ATP</name>
        <dbReference type="ChEBI" id="CHEBI:30616"/>
    </ligand>
</feature>
<feature type="binding site" evidence="2">
    <location>
        <begin position="74"/>
        <end position="80"/>
    </location>
    <ligand>
        <name>ATP</name>
        <dbReference type="ChEBI" id="CHEBI:30616"/>
    </ligand>
</feature>
<feature type="binding site" evidence="2">
    <location>
        <position position="101"/>
    </location>
    <ligand>
        <name>ATP</name>
        <dbReference type="ChEBI" id="CHEBI:30616"/>
    </ligand>
</feature>
<feature type="binding site" evidence="1">
    <location>
        <position position="220"/>
    </location>
    <ligand>
        <name>Mg(2+)</name>
        <dbReference type="ChEBI" id="CHEBI:18420"/>
    </ligand>
</feature>
<feature type="binding site" evidence="1">
    <location>
        <position position="223"/>
    </location>
    <ligand>
        <name>Mg(2+)</name>
        <dbReference type="ChEBI" id="CHEBI:18420"/>
    </ligand>
</feature>
<feature type="binding site" evidence="1">
    <location>
        <position position="225"/>
    </location>
    <ligand>
        <name>Mg(2+)</name>
        <dbReference type="ChEBI" id="CHEBI:18420"/>
    </ligand>
</feature>
<reference key="1">
    <citation type="journal article" date="2005" name="J. Bacteriol.">
        <title>Whole-genome sequencing of Staphylococcus haemolyticus uncovers the extreme plasticity of its genome and the evolution of human-colonizing staphylococcal species.</title>
        <authorList>
            <person name="Takeuchi F."/>
            <person name="Watanabe S."/>
            <person name="Baba T."/>
            <person name="Yuzawa H."/>
            <person name="Ito T."/>
            <person name="Morimoto Y."/>
            <person name="Kuroda M."/>
            <person name="Cui L."/>
            <person name="Takahashi M."/>
            <person name="Ankai A."/>
            <person name="Baba S."/>
            <person name="Fukui S."/>
            <person name="Lee J.C."/>
            <person name="Hiramatsu K."/>
        </authorList>
    </citation>
    <scope>NUCLEOTIDE SEQUENCE [LARGE SCALE GENOMIC DNA]</scope>
    <source>
        <strain>JCSC1435</strain>
    </source>
</reference>
<organism>
    <name type="scientific">Staphylococcus haemolyticus (strain JCSC1435)</name>
    <dbReference type="NCBI Taxonomy" id="279808"/>
    <lineage>
        <taxon>Bacteria</taxon>
        <taxon>Bacillati</taxon>
        <taxon>Bacillota</taxon>
        <taxon>Bacilli</taxon>
        <taxon>Bacillales</taxon>
        <taxon>Staphylococcaceae</taxon>
        <taxon>Staphylococcus</taxon>
    </lineage>
</organism>